<comment type="function">
    <text evidence="1">Binds RpoD and negatively regulates RpoD-mediated transcription activation by preventing the interaction between the primary sigma factor RpoD with the catalytic core of the RNA polymerase and with promoter DNA. May be involved in replacement of the RNA polymerase sigma subunit from RpoD to RpoS during the transition from exponential growth to the stationary phase.</text>
</comment>
<comment type="subunit">
    <text evidence="1">Interacts with RpoD.</text>
</comment>
<comment type="subcellular location">
    <subcellularLocation>
        <location evidence="1">Cytoplasm</location>
    </subcellularLocation>
</comment>
<comment type="similarity">
    <text evidence="1">Belongs to the Rsd/AlgQ family.</text>
</comment>
<gene>
    <name evidence="1" type="primary">rsd</name>
    <name type="ordered locus">UTI89_C3824</name>
</gene>
<feature type="chain" id="PRO_0000268881" description="Regulator of sigma D">
    <location>
        <begin position="1"/>
        <end position="158"/>
    </location>
</feature>
<accession>Q1R5W1</accession>
<keyword id="KW-0963">Cytoplasm</keyword>
<keyword id="KW-0804">Transcription</keyword>
<keyword id="KW-0805">Transcription regulation</keyword>
<reference key="1">
    <citation type="journal article" date="2006" name="Proc. Natl. Acad. Sci. U.S.A.">
        <title>Identification of genes subject to positive selection in uropathogenic strains of Escherichia coli: a comparative genomics approach.</title>
        <authorList>
            <person name="Chen S.L."/>
            <person name="Hung C.-S."/>
            <person name="Xu J."/>
            <person name="Reigstad C.S."/>
            <person name="Magrini V."/>
            <person name="Sabo A."/>
            <person name="Blasiar D."/>
            <person name="Bieri T."/>
            <person name="Meyer R.R."/>
            <person name="Ozersky P."/>
            <person name="Armstrong J.R."/>
            <person name="Fulton R.S."/>
            <person name="Latreille J.P."/>
            <person name="Spieth J."/>
            <person name="Hooton T.M."/>
            <person name="Mardis E.R."/>
            <person name="Hultgren S.J."/>
            <person name="Gordon J.I."/>
        </authorList>
    </citation>
    <scope>NUCLEOTIDE SEQUENCE [LARGE SCALE GENOMIC DNA]</scope>
    <source>
        <strain>UTI89 / UPEC</strain>
    </source>
</reference>
<protein>
    <recommendedName>
        <fullName evidence="1">Regulator of sigma D</fullName>
    </recommendedName>
</protein>
<evidence type="ECO:0000255" key="1">
    <source>
        <dbReference type="HAMAP-Rule" id="MF_01181"/>
    </source>
</evidence>
<name>RSD_ECOUT</name>
<organism>
    <name type="scientific">Escherichia coli (strain UTI89 / UPEC)</name>
    <dbReference type="NCBI Taxonomy" id="364106"/>
    <lineage>
        <taxon>Bacteria</taxon>
        <taxon>Pseudomonadati</taxon>
        <taxon>Pseudomonadota</taxon>
        <taxon>Gammaproteobacteria</taxon>
        <taxon>Enterobacterales</taxon>
        <taxon>Enterobacteriaceae</taxon>
        <taxon>Escherichia</taxon>
    </lineage>
</organism>
<proteinExistence type="inferred from homology"/>
<sequence length="158" mass="18221">MLNQLDNLTERVRGSNKLVDRWLHVRKHLLVAYYNLVGIKPGKESYMRLNEKALDDFCQSLVDYLSAGHFSIYERILHKLEGNGQLARAAKIWPQLEANTQQIMDDYDSSLETAIDHDNYLEFQQVLSDIGEALEARFVLEDKLILLVLDAARVKYPA</sequence>
<dbReference type="EMBL" id="CP000243">
    <property type="protein sequence ID" value="ABE09253.1"/>
    <property type="molecule type" value="Genomic_DNA"/>
</dbReference>
<dbReference type="RefSeq" id="WP_000934300.1">
    <property type="nucleotide sequence ID" value="NZ_CP064825.1"/>
</dbReference>
<dbReference type="SMR" id="Q1R5W1"/>
<dbReference type="KEGG" id="eci:UTI89_C3824"/>
<dbReference type="HOGENOM" id="CLU_142729_0_0_6"/>
<dbReference type="Proteomes" id="UP000001952">
    <property type="component" value="Chromosome"/>
</dbReference>
<dbReference type="GO" id="GO:0005737">
    <property type="term" value="C:cytoplasm"/>
    <property type="evidence" value="ECO:0007669"/>
    <property type="project" value="UniProtKB-SubCell"/>
</dbReference>
<dbReference type="GO" id="GO:0006355">
    <property type="term" value="P:regulation of DNA-templated transcription"/>
    <property type="evidence" value="ECO:0007669"/>
    <property type="project" value="InterPro"/>
</dbReference>
<dbReference type="FunFam" id="1.20.120.1370:FF:000001">
    <property type="entry name" value="Regulator of sigma D"/>
    <property type="match status" value="1"/>
</dbReference>
<dbReference type="Gene3D" id="1.20.120.1370">
    <property type="entry name" value="Regulator of RNA polymerase sigma(70) subunit, domain 4"/>
    <property type="match status" value="1"/>
</dbReference>
<dbReference type="HAMAP" id="MF_01181">
    <property type="entry name" value="Rsd"/>
    <property type="match status" value="1"/>
</dbReference>
<dbReference type="InterPro" id="IPR038309">
    <property type="entry name" value="Rsd/AlgQ_sf"/>
</dbReference>
<dbReference type="InterPro" id="IPR023785">
    <property type="entry name" value="Sigma70_reg_Rsd"/>
</dbReference>
<dbReference type="InterPro" id="IPR007448">
    <property type="entry name" value="Sigma70_reg_Rsd_AlgQ"/>
</dbReference>
<dbReference type="NCBIfam" id="NF008723">
    <property type="entry name" value="PRK11718.1"/>
    <property type="match status" value="1"/>
</dbReference>
<dbReference type="Pfam" id="PF04353">
    <property type="entry name" value="Rsd_AlgQ"/>
    <property type="match status" value="1"/>
</dbReference>
<dbReference type="PIRSF" id="PIRSF016548">
    <property type="entry name" value="Rsd_AlgQ"/>
    <property type="match status" value="1"/>
</dbReference>